<reference key="1">
    <citation type="journal article" date="2016" name="BMC Genomics">
        <title>Comparative genomic and transcriptomic analyses of the Fuzhuan brick tea-fermentation fungus Aspergillus cristatus.</title>
        <authorList>
            <person name="Ge Y."/>
            <person name="Wang Y."/>
            <person name="Liu Y."/>
            <person name="Tan Y."/>
            <person name="Ren X."/>
            <person name="Zhang X."/>
            <person name="Hyde K.D."/>
            <person name="Liu Y."/>
            <person name="Liu Z."/>
        </authorList>
    </citation>
    <scope>NUCLEOTIDE SEQUENCE [LARGE SCALE GENOMIC DNA]</scope>
    <source>
        <strain>GZAAS20.1005</strain>
    </source>
</reference>
<reference key="2">
    <citation type="journal article" date="2022" name="Microb. Cell Fact.">
        <title>Efficient production of a cyclic dipeptide (cyclo-TA) using heterologous expression system of filamentous fungus Aspergillus oryzae.</title>
        <authorList>
            <person name="Qi J."/>
            <person name="Han H."/>
            <person name="Sui D."/>
            <person name="Tan S."/>
            <person name="Liu C."/>
            <person name="Wang P."/>
            <person name="Xie C."/>
            <person name="Xia X."/>
            <person name="Gao J.M."/>
            <person name="Liu C."/>
        </authorList>
    </citation>
    <scope>FUNCTION</scope>
</reference>
<accession>A0A1E3B0S4</accession>
<name>CRIB_ASPCR</name>
<dbReference type="EMBL" id="JXNT01000024">
    <property type="protein sequence ID" value="ODM14528.1"/>
    <property type="molecule type" value="Genomic_DNA"/>
</dbReference>
<dbReference type="SMR" id="A0A1E3B0S4"/>
<dbReference type="STRING" id="573508.A0A1E3B0S4"/>
<dbReference type="VEuPathDB" id="FungiDB:SI65_10014"/>
<dbReference type="OrthoDB" id="6133115at2759"/>
<dbReference type="Proteomes" id="UP000094569">
    <property type="component" value="Unassembled WGS sequence"/>
</dbReference>
<dbReference type="GO" id="GO:0016020">
    <property type="term" value="C:membrane"/>
    <property type="evidence" value="ECO:0007669"/>
    <property type="project" value="UniProtKB-SubCell"/>
</dbReference>
<dbReference type="GO" id="GO:0005351">
    <property type="term" value="F:carbohydrate:proton symporter activity"/>
    <property type="evidence" value="ECO:0007669"/>
    <property type="project" value="TreeGrafter"/>
</dbReference>
<dbReference type="FunFam" id="1.20.1250.20:FF:000134">
    <property type="entry name" value="MFS sugar transporter protein"/>
    <property type="match status" value="1"/>
</dbReference>
<dbReference type="Gene3D" id="1.20.1250.20">
    <property type="entry name" value="MFS general substrate transporter like domains"/>
    <property type="match status" value="1"/>
</dbReference>
<dbReference type="InterPro" id="IPR020846">
    <property type="entry name" value="MFS_dom"/>
</dbReference>
<dbReference type="InterPro" id="IPR005828">
    <property type="entry name" value="MFS_sugar_transport-like"/>
</dbReference>
<dbReference type="InterPro" id="IPR050360">
    <property type="entry name" value="MFS_Sugar_Transporters"/>
</dbReference>
<dbReference type="InterPro" id="IPR036259">
    <property type="entry name" value="MFS_trans_sf"/>
</dbReference>
<dbReference type="InterPro" id="IPR003663">
    <property type="entry name" value="Sugar/inositol_transpt"/>
</dbReference>
<dbReference type="InterPro" id="IPR005829">
    <property type="entry name" value="Sugar_transporter_CS"/>
</dbReference>
<dbReference type="NCBIfam" id="TIGR00879">
    <property type="entry name" value="SP"/>
    <property type="match status" value="1"/>
</dbReference>
<dbReference type="PANTHER" id="PTHR48022">
    <property type="entry name" value="PLASTIDIC GLUCOSE TRANSPORTER 4"/>
    <property type="match status" value="1"/>
</dbReference>
<dbReference type="PANTHER" id="PTHR48022:SF80">
    <property type="entry name" value="SUGAR TRANSPORTER, PUTATIVE (AFU_ORTHOLOGUE AFUA_3G12170)-RELATED"/>
    <property type="match status" value="1"/>
</dbReference>
<dbReference type="Pfam" id="PF00083">
    <property type="entry name" value="Sugar_tr"/>
    <property type="match status" value="1"/>
</dbReference>
<dbReference type="PRINTS" id="PR00171">
    <property type="entry name" value="SUGRTRNSPORT"/>
</dbReference>
<dbReference type="SUPFAM" id="SSF103473">
    <property type="entry name" value="MFS general substrate transporter"/>
    <property type="match status" value="1"/>
</dbReference>
<dbReference type="PROSITE" id="PS50850">
    <property type="entry name" value="MFS"/>
    <property type="match status" value="1"/>
</dbReference>
<dbReference type="PROSITE" id="PS00216">
    <property type="entry name" value="SUGAR_TRANSPORT_1"/>
    <property type="match status" value="1"/>
</dbReference>
<dbReference type="PROSITE" id="PS00217">
    <property type="entry name" value="SUGAR_TRANSPORT_2"/>
    <property type="match status" value="1"/>
</dbReference>
<evidence type="ECO:0000255" key="1"/>
<evidence type="ECO:0000269" key="2">
    <source>
    </source>
</evidence>
<evidence type="ECO:0000303" key="3">
    <source>
    </source>
</evidence>
<evidence type="ECO:0000305" key="4"/>
<gene>
    <name evidence="3" type="primary">criB</name>
    <name type="ORF">SI65_10014</name>
</gene>
<comment type="function">
    <text evidence="2">MFS-type transporter; part of the gene cluster that mediates the biosynthesis of echinulin family alkaloid.</text>
</comment>
<comment type="subcellular location">
    <subcellularLocation>
        <location evidence="1">Membrane</location>
        <topology evidence="1">Multi-pass membrane protein</topology>
    </subcellularLocation>
</comment>
<comment type="similarity">
    <text evidence="4">Belongs to the major facilitator superfamily. Sugar transporter (TC 2.A.1.1) family.</text>
</comment>
<organism>
    <name type="scientific">Aspergillus cristatus</name>
    <name type="common">Chinese Fuzhuan brick tea-fermentation fungus</name>
    <name type="synonym">Eurotium cristatum</name>
    <dbReference type="NCBI Taxonomy" id="573508"/>
    <lineage>
        <taxon>Eukaryota</taxon>
        <taxon>Fungi</taxon>
        <taxon>Dikarya</taxon>
        <taxon>Ascomycota</taxon>
        <taxon>Pezizomycotina</taxon>
        <taxon>Eurotiomycetes</taxon>
        <taxon>Eurotiomycetidae</taxon>
        <taxon>Eurotiales</taxon>
        <taxon>Aspergillaceae</taxon>
        <taxon>Aspergillus</taxon>
        <taxon>Aspergillus subgen. Aspergillus</taxon>
    </lineage>
</organism>
<keyword id="KW-0472">Membrane</keyword>
<keyword id="KW-1185">Reference proteome</keyword>
<keyword id="KW-0812">Transmembrane</keyword>
<keyword id="KW-1133">Transmembrane helix</keyword>
<keyword id="KW-0813">Transport</keyword>
<feature type="chain" id="PRO_0000456858" description="MFS-type transporter criB">
    <location>
        <begin position="1"/>
        <end position="463"/>
    </location>
</feature>
<feature type="transmembrane region" description="Helical" evidence="1">
    <location>
        <begin position="5"/>
        <end position="27"/>
    </location>
</feature>
<feature type="transmembrane region" description="Helical" evidence="1">
    <location>
        <begin position="46"/>
        <end position="66"/>
    </location>
</feature>
<feature type="transmembrane region" description="Helical" evidence="1">
    <location>
        <begin position="83"/>
        <end position="103"/>
    </location>
</feature>
<feature type="transmembrane region" description="Helical" evidence="1">
    <location>
        <begin position="106"/>
        <end position="126"/>
    </location>
</feature>
<feature type="transmembrane region" description="Helical" evidence="1">
    <location>
        <begin position="141"/>
        <end position="161"/>
    </location>
</feature>
<feature type="transmembrane region" description="Helical" evidence="1">
    <location>
        <begin position="168"/>
        <end position="188"/>
    </location>
</feature>
<feature type="transmembrane region" description="Helical" evidence="1">
    <location>
        <begin position="256"/>
        <end position="276"/>
    </location>
</feature>
<feature type="transmembrane region" description="Helical" evidence="1">
    <location>
        <begin position="293"/>
        <end position="313"/>
    </location>
</feature>
<feature type="transmembrane region" description="Helical" evidence="1">
    <location>
        <begin position="323"/>
        <end position="343"/>
    </location>
</feature>
<feature type="transmembrane region" description="Helical" evidence="1">
    <location>
        <begin position="355"/>
        <end position="375"/>
    </location>
</feature>
<feature type="transmembrane region" description="Helical" evidence="1">
    <location>
        <begin position="402"/>
        <end position="422"/>
    </location>
</feature>
<proteinExistence type="inferred from homology"/>
<sequence>MGLSLVLSCGVIAGISGFLFGYDSGIMTTTIAQEQFLQQFKPKESMVGTIVAIMQAGGFFGCLTAGKLSDLWGRRKAIMFGCVFVVVGGALQAAAYHTAMLLIGRLVTGFGVGSLTMTVPVYQAEISPPRWRGTIVGCQQLMLAIGSAIANWTGYGCSFVNSSFQWRMPLALQAVPGIVLFFGSYFLPESPRWLVEHDALDAALHVVQRLYPDKQNLDSAYAEFQEIVEQIKQEKAQASERSYLQIFRRKAWRKRLFLGAGIWLMLNLTGINVINYYLTQFFTSLGYKGRRAIFLSGVYGSVGAATTFLALFFVHRLSRKTPLMMANISQTATLIVMAGLTAASELGKSGQMGGVAMIFLFFVIYCSTWGPLSWVYASEIFPTQIRSKGYSMASAVNCEWRFYFLFVATNFISALVLLFLYPETSGKSLEAIDLLFDDHQTIHRSTLEENEVRRTSESVNAKH</sequence>
<protein>
    <recommendedName>
        <fullName evidence="3">MFS-type transporter criB</fullName>
    </recommendedName>
    <alternativeName>
        <fullName evidence="3">Echinulin biosynthesis cluster protein B</fullName>
    </alternativeName>
</protein>